<sequence>MGIPADNLQSRAKASFDTRVSAAELALARGVVPSLANGEELLYRNPDPENGDPSFIVSFTKGLPHDDNGAIIDPDDFLAFVRAINSGDEKEIADLTLGPARDPDTGLPIWRSDLANSLELEVRGWENSSAGLTFDLEGPDAQSIAMPPAPVLTSPELIAEIAELYLMALGREIEFSEFDSPKNAEYIQFAIDQLNGLEWFNTPAMLGDPPAEIRRRRGEVTVGNLFRGILPGSEVGPYLSQYIIVGSKQIGSATGGNKTLVSPNAADEFDGEIAYGSITISQRVRIATPGRDFMTDLKVFLDVQDAADFRGFESYEPGARLIRTIRDLATWVHFDALYEAYLNACLILLANRVPFDPNIPFQQEDKLDNQDVFVNFGDAHVLSLVTEVATRALKAVRYQKFNIHRRLRPEATGGLISVNKIAAEKGESVFPEVDLAVEELEDILEKAEISNRKQNIADGDPDPDPSFLLPQAFAEGSPFHPSYGSGHAVVAGACVTILKAFFDSNFQIDQVFEVDKDEDKLVKSSFKGTLTVAGELNKLADNIAIGRNMAGVHYFSDQFESILLGEQVAIGILEEQSLTYGENFFFNLPKFDGTTIQI</sequence>
<evidence type="ECO:0000250" key="1"/>
<evidence type="ECO:0000250" key="2">
    <source>
        <dbReference type="UniProtKB" id="P81701"/>
    </source>
</evidence>
<evidence type="ECO:0000269" key="3">
    <source>
    </source>
</evidence>
<evidence type="ECO:0000269" key="4">
    <source>
    </source>
</evidence>
<evidence type="ECO:0000305" key="5"/>
<evidence type="ECO:0007744" key="6">
    <source>
        <dbReference type="PDB" id="1QHB"/>
    </source>
</evidence>
<evidence type="ECO:0007829" key="7">
    <source>
        <dbReference type="PDB" id="1QHB"/>
    </source>
</evidence>
<dbReference type="EC" id="1.11.1.18"/>
<dbReference type="EMBL" id="AF218810">
    <property type="protein sequence ID" value="AAM46061.1"/>
    <property type="molecule type" value="mRNA"/>
</dbReference>
<dbReference type="PDB" id="1QHB">
    <property type="method" value="X-ray"/>
    <property type="resolution" value="2.30 A"/>
    <property type="chains" value="A/B/C/D/E/F=1-598"/>
</dbReference>
<dbReference type="PDBsum" id="1QHB"/>
<dbReference type="SMR" id="Q8LLW7"/>
<dbReference type="PeroxiBase" id="5901">
    <property type="entry name" value="CoVBPo"/>
</dbReference>
<dbReference type="KEGG" id="ag:AAM46061"/>
<dbReference type="BRENDA" id="1.11.1.18">
    <property type="organism ID" value="1611"/>
</dbReference>
<dbReference type="EvolutionaryTrace" id="Q8LLW7"/>
<dbReference type="GO" id="GO:0019806">
    <property type="term" value="F:bromide peroxidase activity"/>
    <property type="evidence" value="ECO:0007669"/>
    <property type="project" value="UniProtKB-EC"/>
</dbReference>
<dbReference type="GO" id="GO:0046872">
    <property type="term" value="F:metal ion binding"/>
    <property type="evidence" value="ECO:0007669"/>
    <property type="project" value="UniProtKB-KW"/>
</dbReference>
<dbReference type="CDD" id="cd03398">
    <property type="entry name" value="PAP2_haloperoxidase"/>
    <property type="match status" value="1"/>
</dbReference>
<dbReference type="Gene3D" id="1.10.606.10">
    <property type="entry name" value="Vanadium-containing Chloroperoxidase, domain 2"/>
    <property type="match status" value="1"/>
</dbReference>
<dbReference type="InterPro" id="IPR016119">
    <property type="entry name" value="Br/Cl_peroxidase_C"/>
</dbReference>
<dbReference type="InterPro" id="IPR036938">
    <property type="entry name" value="P_Acid_Pase_2/haloperoxi_sf"/>
</dbReference>
<dbReference type="InterPro" id="IPR052559">
    <property type="entry name" value="V-haloperoxidase"/>
</dbReference>
<dbReference type="PANTHER" id="PTHR34599">
    <property type="entry name" value="PEROXIDASE-RELATED"/>
    <property type="match status" value="1"/>
</dbReference>
<dbReference type="PANTHER" id="PTHR34599:SF1">
    <property type="entry name" value="PHOSPHATIDIC ACID PHOSPHATASE TYPE 2_HALOPEROXIDASE DOMAIN-CONTAINING PROTEIN"/>
    <property type="match status" value="1"/>
</dbReference>
<dbReference type="SUPFAM" id="SSF48317">
    <property type="entry name" value="Acid phosphatase/Vanadium-dependent haloperoxidase"/>
    <property type="match status" value="1"/>
</dbReference>
<name>PRXV_COROI</name>
<organism>
    <name type="scientific">Corallina officinalis</name>
    <name type="common">Coral seaweed</name>
    <dbReference type="NCBI Taxonomy" id="35170"/>
    <lineage>
        <taxon>Eukaryota</taxon>
        <taxon>Rhodophyta</taxon>
        <taxon>Florideophyceae</taxon>
        <taxon>Corallinophycidae</taxon>
        <taxon>Corallinales</taxon>
        <taxon>Corallinaceae</taxon>
        <taxon>Corallinoideae</taxon>
        <taxon>Corallina</taxon>
    </lineage>
</organism>
<reference key="1">
    <citation type="journal article" date="2002" name="J. Inorg. Biochem.">
        <title>Reactivity of recombinant and mutant vanadium bromoperoxidase from the red alga Corallina officinalis.</title>
        <authorList>
            <person name="Carter J.N."/>
            <person name="Beatty K.E."/>
            <person name="Simpson M.T."/>
            <person name="Butler A."/>
        </authorList>
    </citation>
    <scope>NUCLEOTIDE SEQUENCE [MRNA]</scope>
    <scope>FUNCTION</scope>
    <scope>CATALYTIC ACTIVITY</scope>
    <scope>BIOPHYSICOCHEMICAL PROPERTIES</scope>
    <scope>SUBUNIT</scope>
    <scope>MUTAGENESIS OF HIS-480</scope>
</reference>
<reference evidence="6" key="2">
    <citation type="journal article" date="2000" name="J. Mol. Biol.">
        <title>Crystal structure of dodecameric vanadium-dependent bromoperoxidase from the red algae Corallina officinalis.</title>
        <authorList>
            <person name="Isupov M.N."/>
            <person name="Dalby A.R."/>
            <person name="Brindley A.A."/>
            <person name="Izumi Y."/>
            <person name="Tanabe T."/>
            <person name="Murshudov G.N."/>
            <person name="Littlechild J.A."/>
        </authorList>
    </citation>
    <scope>X-RAY CRYSTALLOGRAPHY (2.3 ANGSTROMS) IN COMPLEX WITH CALCIUM AND PHOSPHATE</scope>
    <scope>COFACTOR</scope>
</reference>
<proteinExistence type="evidence at protein level"/>
<protein>
    <recommendedName>
        <fullName>Vanadium-dependent bromoperoxidase</fullName>
        <ecNumber>1.11.1.18</ecNumber>
    </recommendedName>
    <alternativeName>
        <fullName>Vanadium haloperoxidase</fullName>
    </alternativeName>
</protein>
<feature type="chain" id="PRO_0000401199" description="Vanadium-dependent bromoperoxidase">
    <location>
        <begin position="1"/>
        <end position="598"/>
    </location>
</feature>
<feature type="active site" evidence="1">
    <location>
        <position position="480"/>
    </location>
</feature>
<feature type="active site" evidence="1">
    <location>
        <position position="487"/>
    </location>
</feature>
<feature type="binding site" evidence="6">
    <location>
        <position position="361"/>
    </location>
    <ligand>
        <name>Ca(2+)</name>
        <dbReference type="ChEBI" id="CHEBI:29108"/>
    </ligand>
</feature>
<feature type="binding site" evidence="6">
    <location>
        <position position="363"/>
    </location>
    <ligand>
        <name>Ca(2+)</name>
        <dbReference type="ChEBI" id="CHEBI:29108"/>
    </ligand>
</feature>
<feature type="binding site" evidence="6">
    <location>
        <position position="365"/>
    </location>
    <ligand>
        <name>Ca(2+)</name>
        <dbReference type="ChEBI" id="CHEBI:29108"/>
    </ligand>
</feature>
<feature type="binding site" evidence="6">
    <location>
        <position position="368"/>
    </location>
    <ligand>
        <name>Ca(2+)</name>
        <dbReference type="ChEBI" id="CHEBI:29108"/>
    </ligand>
</feature>
<feature type="binding site" evidence="6">
    <location>
        <position position="370"/>
    </location>
    <ligand>
        <name>Ca(2+)</name>
        <dbReference type="ChEBI" id="CHEBI:29108"/>
    </ligand>
</feature>
<feature type="binding site" evidence="2">
    <location>
        <position position="400"/>
    </location>
    <ligand>
        <name>vanadate</name>
        <dbReference type="ChEBI" id="CHEBI:35169"/>
    </ligand>
</feature>
<feature type="binding site" evidence="2">
    <location>
        <position position="408"/>
    </location>
    <ligand>
        <name>vanadate</name>
        <dbReference type="ChEBI" id="CHEBI:35169"/>
    </ligand>
</feature>
<feature type="binding site" evidence="2">
    <location>
        <position position="485"/>
    </location>
    <ligand>
        <name>vanadate</name>
        <dbReference type="ChEBI" id="CHEBI:35169"/>
    </ligand>
</feature>
<feature type="binding site" evidence="2">
    <location>
        <position position="486"/>
    </location>
    <ligand>
        <name>vanadate</name>
        <dbReference type="ChEBI" id="CHEBI:35169"/>
    </ligand>
</feature>
<feature type="binding site" evidence="2">
    <location>
        <position position="487"/>
    </location>
    <ligand>
        <name>vanadate</name>
        <dbReference type="ChEBI" id="CHEBI:35169"/>
    </ligand>
</feature>
<feature type="binding site" evidence="2">
    <location>
        <position position="547"/>
    </location>
    <ligand>
        <name>vanadate</name>
        <dbReference type="ChEBI" id="CHEBI:35169"/>
    </ligand>
</feature>
<feature type="binding site" evidence="2">
    <location>
        <position position="553"/>
    </location>
    <ligand>
        <name>vanadate</name>
        <dbReference type="ChEBI" id="CHEBI:35169"/>
    </ligand>
</feature>
<feature type="mutagenesis site" description="Shows 4% of wild-type activity." evidence="4">
    <original>H</original>
    <variation>A</variation>
    <location>
        <position position="480"/>
    </location>
</feature>
<feature type="helix" evidence="7">
    <location>
        <begin position="11"/>
        <end position="28"/>
    </location>
</feature>
<feature type="helix" evidence="7">
    <location>
        <begin position="39"/>
        <end position="41"/>
    </location>
</feature>
<feature type="strand" evidence="7">
    <location>
        <begin position="69"/>
        <end position="72"/>
    </location>
</feature>
<feature type="helix" evidence="7">
    <location>
        <begin position="74"/>
        <end position="86"/>
    </location>
</feature>
<feature type="helix" evidence="7">
    <location>
        <begin position="89"/>
        <end position="93"/>
    </location>
</feature>
<feature type="turn" evidence="7">
    <location>
        <begin position="103"/>
        <end position="105"/>
    </location>
</feature>
<feature type="helix" evidence="7">
    <location>
        <begin position="113"/>
        <end position="117"/>
    </location>
</feature>
<feature type="helix" evidence="7">
    <location>
        <begin position="130"/>
        <end position="132"/>
    </location>
</feature>
<feature type="strand" evidence="7">
    <location>
        <begin position="136"/>
        <end position="139"/>
    </location>
</feature>
<feature type="helix" evidence="7">
    <location>
        <begin position="155"/>
        <end position="169"/>
    </location>
</feature>
<feature type="turn" evidence="7">
    <location>
        <begin position="170"/>
        <end position="172"/>
    </location>
</feature>
<feature type="helix" evidence="7">
    <location>
        <begin position="175"/>
        <end position="177"/>
    </location>
</feature>
<feature type="helix" evidence="7">
    <location>
        <begin position="181"/>
        <end position="183"/>
    </location>
</feature>
<feature type="helix" evidence="7">
    <location>
        <begin position="184"/>
        <end position="194"/>
    </location>
</feature>
<feature type="helix" evidence="7">
    <location>
        <begin position="198"/>
        <end position="201"/>
    </location>
</feature>
<feature type="helix" evidence="7">
    <location>
        <begin position="210"/>
        <end position="215"/>
    </location>
</feature>
<feature type="turn" evidence="7">
    <location>
        <begin position="222"/>
        <end position="226"/>
    </location>
</feature>
<feature type="turn" evidence="7">
    <location>
        <begin position="231"/>
        <end position="234"/>
    </location>
</feature>
<feature type="helix" evidence="7">
    <location>
        <begin position="241"/>
        <end position="243"/>
    </location>
</feature>
<feature type="strand" evidence="7">
    <location>
        <begin position="253"/>
        <end position="255"/>
    </location>
</feature>
<feature type="strand" evidence="7">
    <location>
        <begin position="258"/>
        <end position="260"/>
    </location>
</feature>
<feature type="helix" evidence="7">
    <location>
        <begin position="265"/>
        <end position="270"/>
    </location>
</feature>
<feature type="strand" evidence="7">
    <location>
        <begin position="272"/>
        <end position="275"/>
    </location>
</feature>
<feature type="strand" evidence="7">
    <location>
        <begin position="278"/>
        <end position="281"/>
    </location>
</feature>
<feature type="strand" evidence="7">
    <location>
        <begin position="284"/>
        <end position="287"/>
    </location>
</feature>
<feature type="helix" evidence="7">
    <location>
        <begin position="297"/>
        <end position="304"/>
    </location>
</feature>
<feature type="strand" evidence="7">
    <location>
        <begin position="315"/>
        <end position="321"/>
    </location>
</feature>
<feature type="helix" evidence="7">
    <location>
        <begin position="325"/>
        <end position="334"/>
    </location>
</feature>
<feature type="helix" evidence="7">
    <location>
        <begin position="339"/>
        <end position="351"/>
    </location>
</feature>
<feature type="helix" evidence="7">
    <location>
        <begin position="365"/>
        <end position="368"/>
    </location>
</feature>
<feature type="helix" evidence="7">
    <location>
        <begin position="378"/>
        <end position="401"/>
    </location>
</feature>
<feature type="turn" evidence="7">
    <location>
        <begin position="402"/>
        <end position="404"/>
    </location>
</feature>
<feature type="helix" evidence="7">
    <location>
        <begin position="409"/>
        <end position="424"/>
    </location>
</feature>
<feature type="helix" evidence="7">
    <location>
        <begin position="431"/>
        <end position="433"/>
    </location>
</feature>
<feature type="helix" evidence="7">
    <location>
        <begin position="434"/>
        <end position="439"/>
    </location>
</feature>
<feature type="helix" evidence="7">
    <location>
        <begin position="441"/>
        <end position="458"/>
    </location>
</feature>
<feature type="strand" evidence="7">
    <location>
        <begin position="471"/>
        <end position="473"/>
    </location>
</feature>
<feature type="strand" evidence="7">
    <location>
        <begin position="482"/>
        <end position="484"/>
    </location>
</feature>
<feature type="helix" evidence="7">
    <location>
        <begin position="486"/>
        <end position="501"/>
    </location>
</feature>
<feature type="turn" evidence="7">
    <location>
        <begin position="503"/>
        <end position="505"/>
    </location>
</feature>
<feature type="strand" evidence="7">
    <location>
        <begin position="512"/>
        <end position="514"/>
    </location>
</feature>
<feature type="strand" evidence="7">
    <location>
        <begin position="516"/>
        <end position="523"/>
    </location>
</feature>
<feature type="helix" evidence="7">
    <location>
        <begin position="532"/>
        <end position="550"/>
    </location>
</feature>
<feature type="helix" evidence="7">
    <location>
        <begin position="555"/>
        <end position="576"/>
    </location>
</feature>
<feature type="helix" evidence="7">
    <location>
        <begin position="577"/>
        <end position="579"/>
    </location>
</feature>
<feature type="strand" evidence="7">
    <location>
        <begin position="587"/>
        <end position="589"/>
    </location>
</feature>
<feature type="strand" evidence="7">
    <location>
        <begin position="595"/>
        <end position="597"/>
    </location>
</feature>
<keyword id="KW-0002">3D-structure</keyword>
<keyword id="KW-0479">Metal-binding</keyword>
<keyword id="KW-0560">Oxidoreductase</keyword>
<keyword id="KW-0575">Peroxidase</keyword>
<keyword id="KW-0837">Vanadium</keyword>
<comment type="function">
    <text evidence="4">Catalyzes the halogenation of organic substrates in the presence of hydrogen peroxide.</text>
</comment>
<comment type="catalytic activity">
    <reaction evidence="4">
        <text>RH + Br(-) + H2O2 = RBr + 2 H2O.</text>
        <dbReference type="EC" id="1.11.1.18"/>
    </reaction>
</comment>
<comment type="cofactor">
    <cofactor evidence="3">
        <name>Ca(2+)</name>
        <dbReference type="ChEBI" id="CHEBI:29108"/>
    </cofactor>
    <text evidence="3">Binds 1 Ca(2+) ion per subunit. The binding is important for enzyme stability.</text>
</comment>
<comment type="cofactor">
    <cofactor evidence="3">
        <name>vanadate</name>
        <dbReference type="ChEBI" id="CHEBI:35169"/>
    </cofactor>
    <text evidence="3">Binds 1 vanadate ion per subunit.</text>
</comment>
<comment type="biophysicochemical properties">
    <kinetics>
        <KM evidence="4">1.2 mM for bromide</KM>
        <KM evidence="4">1.8 mM for iodide</KM>
        <KM evidence="4">17 uM for H(2)O(2)</KM>
    </kinetics>
    <phDependence>
        <text evidence="4">Optimum pH is 6.0.</text>
    </phDependence>
</comment>
<comment type="subunit">
    <text evidence="3 4">Homododecamer.</text>
</comment>
<comment type="similarity">
    <text evidence="5">Belongs to the vanadium-dependent haloperoxidase family.</text>
</comment>
<accession>Q8LLW7</accession>